<gene>
    <name evidence="1" type="primary">ppsR</name>
    <name type="ordered locus">EcSMS35_1487</name>
</gene>
<proteinExistence type="inferred from homology"/>
<name>PSRP_ECOSM</name>
<sequence length="277" mass="31211">MDNAVDRHVFYISDGTAITAEVLGHAVMSQFPVTISSITLPFVENESRARAVKDQIDAIYHQTGVRPLVFYSIVLPEIRAIILQSEGFCQDIVQALVAPLQQEMKLDPTPIAHRTHGLNPNNLNKYDARIAAIDYTLAHDDGISLRNLDQAQVILLGVSRCGKTPTSLYLAMQFGIRAANYPFIADDMDNLVLPASLKPLQHKLFGLTIDPERLAAIREERRENSRYASLRQCRMEVAEVEALYRKNQIPWINSTNYSVEEIATKILDIMGLSRRMY</sequence>
<protein>
    <recommendedName>
        <fullName evidence="1">Phosphoenolpyruvate synthase regulatory protein</fullName>
        <shortName evidence="1">PEP synthase regulatory protein</shortName>
        <shortName evidence="1">PSRP</shortName>
        <ecNumber evidence="1">2.7.11.33</ecNumber>
        <ecNumber evidence="1">2.7.4.28</ecNumber>
    </recommendedName>
    <alternativeName>
        <fullName evidence="1">Pyruvate, water dikinase regulatory protein</fullName>
    </alternativeName>
</protein>
<keyword id="KW-0418">Kinase</keyword>
<keyword id="KW-0547">Nucleotide-binding</keyword>
<keyword id="KW-0723">Serine/threonine-protein kinase</keyword>
<keyword id="KW-0808">Transferase</keyword>
<reference key="1">
    <citation type="journal article" date="2008" name="J. Bacteriol.">
        <title>Insights into the environmental resistance gene pool from the genome sequence of the multidrug-resistant environmental isolate Escherichia coli SMS-3-5.</title>
        <authorList>
            <person name="Fricke W.F."/>
            <person name="Wright M.S."/>
            <person name="Lindell A.H."/>
            <person name="Harkins D.M."/>
            <person name="Baker-Austin C."/>
            <person name="Ravel J."/>
            <person name="Stepanauskas R."/>
        </authorList>
    </citation>
    <scope>NUCLEOTIDE SEQUENCE [LARGE SCALE GENOMIC DNA]</scope>
    <source>
        <strain>SMS-3-5 / SECEC</strain>
    </source>
</reference>
<dbReference type="EC" id="2.7.11.33" evidence="1"/>
<dbReference type="EC" id="2.7.4.28" evidence="1"/>
<dbReference type="EMBL" id="CP000970">
    <property type="protein sequence ID" value="ACB18669.1"/>
    <property type="molecule type" value="Genomic_DNA"/>
</dbReference>
<dbReference type="RefSeq" id="WP_000368046.1">
    <property type="nucleotide sequence ID" value="NC_010498.1"/>
</dbReference>
<dbReference type="SMR" id="B1LE27"/>
<dbReference type="GeneID" id="93775866"/>
<dbReference type="KEGG" id="ecm:EcSMS35_1487"/>
<dbReference type="HOGENOM" id="CLU_046206_1_0_6"/>
<dbReference type="Proteomes" id="UP000007011">
    <property type="component" value="Chromosome"/>
</dbReference>
<dbReference type="GO" id="GO:0043531">
    <property type="term" value="F:ADP binding"/>
    <property type="evidence" value="ECO:0007669"/>
    <property type="project" value="UniProtKB-UniRule"/>
</dbReference>
<dbReference type="GO" id="GO:0005524">
    <property type="term" value="F:ATP binding"/>
    <property type="evidence" value="ECO:0007669"/>
    <property type="project" value="InterPro"/>
</dbReference>
<dbReference type="GO" id="GO:0016776">
    <property type="term" value="F:phosphotransferase activity, phosphate group as acceptor"/>
    <property type="evidence" value="ECO:0007669"/>
    <property type="project" value="UniProtKB-UniRule"/>
</dbReference>
<dbReference type="GO" id="GO:0004674">
    <property type="term" value="F:protein serine/threonine kinase activity"/>
    <property type="evidence" value="ECO:0007669"/>
    <property type="project" value="UniProtKB-UniRule"/>
</dbReference>
<dbReference type="HAMAP" id="MF_01062">
    <property type="entry name" value="PSRP"/>
    <property type="match status" value="1"/>
</dbReference>
<dbReference type="InterPro" id="IPR005177">
    <property type="entry name" value="Kinase-pyrophosphorylase"/>
</dbReference>
<dbReference type="InterPro" id="IPR026530">
    <property type="entry name" value="PSRP"/>
</dbReference>
<dbReference type="NCBIfam" id="NF003742">
    <property type="entry name" value="PRK05339.1"/>
    <property type="match status" value="1"/>
</dbReference>
<dbReference type="PANTHER" id="PTHR31756">
    <property type="entry name" value="PYRUVATE, PHOSPHATE DIKINASE REGULATORY PROTEIN 1, CHLOROPLASTIC"/>
    <property type="match status" value="1"/>
</dbReference>
<dbReference type="PANTHER" id="PTHR31756:SF3">
    <property type="entry name" value="PYRUVATE, PHOSPHATE DIKINASE REGULATORY PROTEIN 1, CHLOROPLASTIC"/>
    <property type="match status" value="1"/>
</dbReference>
<dbReference type="Pfam" id="PF03618">
    <property type="entry name" value="Kinase-PPPase"/>
    <property type="match status" value="1"/>
</dbReference>
<organism>
    <name type="scientific">Escherichia coli (strain SMS-3-5 / SECEC)</name>
    <dbReference type="NCBI Taxonomy" id="439855"/>
    <lineage>
        <taxon>Bacteria</taxon>
        <taxon>Pseudomonadati</taxon>
        <taxon>Pseudomonadota</taxon>
        <taxon>Gammaproteobacteria</taxon>
        <taxon>Enterobacterales</taxon>
        <taxon>Enterobacteriaceae</taxon>
        <taxon>Escherichia</taxon>
    </lineage>
</organism>
<comment type="function">
    <text evidence="1">Bifunctional serine/threonine kinase and phosphorylase involved in the regulation of the phosphoenolpyruvate synthase (PEPS) by catalyzing its phosphorylation/dephosphorylation.</text>
</comment>
<comment type="catalytic activity">
    <reaction evidence="1">
        <text>[pyruvate, water dikinase] + ADP = [pyruvate, water dikinase]-phosphate + AMP + H(+)</text>
        <dbReference type="Rhea" id="RHEA:46020"/>
        <dbReference type="Rhea" id="RHEA-COMP:11425"/>
        <dbReference type="Rhea" id="RHEA-COMP:11426"/>
        <dbReference type="ChEBI" id="CHEBI:15378"/>
        <dbReference type="ChEBI" id="CHEBI:43176"/>
        <dbReference type="ChEBI" id="CHEBI:68546"/>
        <dbReference type="ChEBI" id="CHEBI:456215"/>
        <dbReference type="ChEBI" id="CHEBI:456216"/>
        <dbReference type="EC" id="2.7.11.33"/>
    </reaction>
</comment>
<comment type="catalytic activity">
    <reaction evidence="1">
        <text>[pyruvate, water dikinase]-phosphate + phosphate + H(+) = [pyruvate, water dikinase] + diphosphate</text>
        <dbReference type="Rhea" id="RHEA:48580"/>
        <dbReference type="Rhea" id="RHEA-COMP:11425"/>
        <dbReference type="Rhea" id="RHEA-COMP:11426"/>
        <dbReference type="ChEBI" id="CHEBI:15378"/>
        <dbReference type="ChEBI" id="CHEBI:33019"/>
        <dbReference type="ChEBI" id="CHEBI:43176"/>
        <dbReference type="ChEBI" id="CHEBI:43474"/>
        <dbReference type="ChEBI" id="CHEBI:68546"/>
        <dbReference type="EC" id="2.7.4.28"/>
    </reaction>
</comment>
<comment type="similarity">
    <text evidence="1">Belongs to the pyruvate, phosphate/water dikinase regulatory protein family. PSRP subfamily.</text>
</comment>
<feature type="chain" id="PRO_1000136473" description="Phosphoenolpyruvate synthase regulatory protein">
    <location>
        <begin position="1"/>
        <end position="277"/>
    </location>
</feature>
<feature type="binding site" evidence="1">
    <location>
        <begin position="157"/>
        <end position="164"/>
    </location>
    <ligand>
        <name>ADP</name>
        <dbReference type="ChEBI" id="CHEBI:456216"/>
    </ligand>
</feature>
<accession>B1LE27</accession>
<evidence type="ECO:0000255" key="1">
    <source>
        <dbReference type="HAMAP-Rule" id="MF_01062"/>
    </source>
</evidence>